<dbReference type="EMBL" id="CP000046">
    <property type="protein sequence ID" value="AAW36426.1"/>
    <property type="molecule type" value="Genomic_DNA"/>
</dbReference>
<dbReference type="RefSeq" id="WP_000974460.1">
    <property type="nucleotide sequence ID" value="NZ_JBGOFO010000005.1"/>
</dbReference>
<dbReference type="SMR" id="Q5HHL3"/>
<dbReference type="KEGG" id="sac:SACOL0872"/>
<dbReference type="HOGENOM" id="CLU_106355_2_1_9"/>
<dbReference type="Proteomes" id="UP000000530">
    <property type="component" value="Chromosome"/>
</dbReference>
<dbReference type="GO" id="GO:0006979">
    <property type="term" value="P:response to oxidative stress"/>
    <property type="evidence" value="ECO:0007669"/>
    <property type="project" value="InterPro"/>
</dbReference>
<dbReference type="Gene3D" id="2.20.25.10">
    <property type="match status" value="1"/>
</dbReference>
<dbReference type="Gene3D" id="3.30.300.20">
    <property type="match status" value="1"/>
</dbReference>
<dbReference type="InterPro" id="IPR015946">
    <property type="entry name" value="KH_dom-like_a/b"/>
</dbReference>
<dbReference type="InterPro" id="IPR019953">
    <property type="entry name" value="OHR"/>
</dbReference>
<dbReference type="InterPro" id="IPR003718">
    <property type="entry name" value="OsmC/Ohr_fam"/>
</dbReference>
<dbReference type="InterPro" id="IPR036102">
    <property type="entry name" value="OsmC/Ohrsf"/>
</dbReference>
<dbReference type="NCBIfam" id="TIGR03561">
    <property type="entry name" value="organ_hyd_perox"/>
    <property type="match status" value="1"/>
</dbReference>
<dbReference type="PANTHER" id="PTHR33797">
    <property type="entry name" value="ORGANIC HYDROPEROXIDE RESISTANCE PROTEIN-LIKE"/>
    <property type="match status" value="1"/>
</dbReference>
<dbReference type="PANTHER" id="PTHR33797:SF2">
    <property type="entry name" value="ORGANIC HYDROPEROXIDE RESISTANCE PROTEIN-LIKE"/>
    <property type="match status" value="1"/>
</dbReference>
<dbReference type="Pfam" id="PF02566">
    <property type="entry name" value="OsmC"/>
    <property type="match status" value="1"/>
</dbReference>
<dbReference type="SUPFAM" id="SSF82784">
    <property type="entry name" value="OsmC-like"/>
    <property type="match status" value="1"/>
</dbReference>
<accession>Q5HHL3</accession>
<organism>
    <name type="scientific">Staphylococcus aureus (strain COL)</name>
    <dbReference type="NCBI Taxonomy" id="93062"/>
    <lineage>
        <taxon>Bacteria</taxon>
        <taxon>Bacillati</taxon>
        <taxon>Bacillota</taxon>
        <taxon>Bacilli</taxon>
        <taxon>Bacillales</taxon>
        <taxon>Staphylococcaceae</taxon>
        <taxon>Staphylococcus</taxon>
    </lineage>
</organism>
<feature type="chain" id="PRO_0000288955" description="Organic hydroperoxide resistance protein-like">
    <location>
        <begin position="1"/>
        <end position="140"/>
    </location>
</feature>
<reference key="1">
    <citation type="journal article" date="2005" name="J. Bacteriol.">
        <title>Insights on evolution of virulence and resistance from the complete genome analysis of an early methicillin-resistant Staphylococcus aureus strain and a biofilm-producing methicillin-resistant Staphylococcus epidermidis strain.</title>
        <authorList>
            <person name="Gill S.R."/>
            <person name="Fouts D.E."/>
            <person name="Archer G.L."/>
            <person name="Mongodin E.F."/>
            <person name="DeBoy R.T."/>
            <person name="Ravel J."/>
            <person name="Paulsen I.T."/>
            <person name="Kolonay J.F."/>
            <person name="Brinkac L.M."/>
            <person name="Beanan M.J."/>
            <person name="Dodson R.J."/>
            <person name="Daugherty S.C."/>
            <person name="Madupu R."/>
            <person name="Angiuoli S.V."/>
            <person name="Durkin A.S."/>
            <person name="Haft D.H."/>
            <person name="Vamathevan J.J."/>
            <person name="Khouri H."/>
            <person name="Utterback T.R."/>
            <person name="Lee C."/>
            <person name="Dimitrov G."/>
            <person name="Jiang L."/>
            <person name="Qin H."/>
            <person name="Weidman J."/>
            <person name="Tran K."/>
            <person name="Kang K.H."/>
            <person name="Hance I.R."/>
            <person name="Nelson K.E."/>
            <person name="Fraser C.M."/>
        </authorList>
    </citation>
    <scope>NUCLEOTIDE SEQUENCE [LARGE SCALE GENOMIC DNA]</scope>
    <source>
        <strain>COL</strain>
    </source>
</reference>
<comment type="similarity">
    <text evidence="1">Belongs to the OsmC/Ohr family.</text>
</comment>
<name>OHRL_STAAC</name>
<sequence length="140" mass="15339">MAIHYETKATNVGGRKGHVYTDDRALDIDIVPPAQADGKATNPEQLFAAGYASCFNGAFDLILKQNKVRDAHPEVTLTVRLEDDSDSESPKLSVSIDATIKNVISQEEAEKYLQMAHEFCPYSKATQGNINVDLNVNVVD</sequence>
<gene>
    <name type="ordered locus">SACOL0872</name>
</gene>
<protein>
    <recommendedName>
        <fullName>Organic hydroperoxide resistance protein-like</fullName>
    </recommendedName>
</protein>
<proteinExistence type="inferred from homology"/>
<evidence type="ECO:0000305" key="1"/>